<protein>
    <recommendedName>
        <fullName evidence="1">Phosphate acyltransferase</fullName>
        <ecNumber evidence="1">2.3.1.274</ecNumber>
    </recommendedName>
    <alternativeName>
        <fullName evidence="1">Acyl-ACP phosphotransacylase</fullName>
    </alternativeName>
    <alternativeName>
        <fullName evidence="1">Acyl-[acyl-carrier-protein]--phosphate acyltransferase</fullName>
    </alternativeName>
    <alternativeName>
        <fullName evidence="1">Phosphate-acyl-ACP acyltransferase</fullName>
    </alternativeName>
</protein>
<organism>
    <name type="scientific">Legionella pneumophila (strain Corby)</name>
    <dbReference type="NCBI Taxonomy" id="400673"/>
    <lineage>
        <taxon>Bacteria</taxon>
        <taxon>Pseudomonadati</taxon>
        <taxon>Pseudomonadota</taxon>
        <taxon>Gammaproteobacteria</taxon>
        <taxon>Legionellales</taxon>
        <taxon>Legionellaceae</taxon>
        <taxon>Legionella</taxon>
    </lineage>
</organism>
<comment type="function">
    <text evidence="1">Catalyzes the reversible formation of acyl-phosphate (acyl-PO(4)) from acyl-[acyl-carrier-protein] (acyl-ACP). This enzyme utilizes acyl-ACP as fatty acyl donor, but not acyl-CoA.</text>
</comment>
<comment type="catalytic activity">
    <reaction evidence="1">
        <text>a fatty acyl-[ACP] + phosphate = an acyl phosphate + holo-[ACP]</text>
        <dbReference type="Rhea" id="RHEA:42292"/>
        <dbReference type="Rhea" id="RHEA-COMP:9685"/>
        <dbReference type="Rhea" id="RHEA-COMP:14125"/>
        <dbReference type="ChEBI" id="CHEBI:43474"/>
        <dbReference type="ChEBI" id="CHEBI:59918"/>
        <dbReference type="ChEBI" id="CHEBI:64479"/>
        <dbReference type="ChEBI" id="CHEBI:138651"/>
        <dbReference type="EC" id="2.3.1.274"/>
    </reaction>
</comment>
<comment type="pathway">
    <text evidence="1">Lipid metabolism; phospholipid metabolism.</text>
</comment>
<comment type="subunit">
    <text evidence="1">Homodimer. Probably interacts with PlsY.</text>
</comment>
<comment type="subcellular location">
    <subcellularLocation>
        <location evidence="1">Cytoplasm</location>
    </subcellularLocation>
    <text evidence="1">Associated with the membrane possibly through PlsY.</text>
</comment>
<comment type="similarity">
    <text evidence="1">Belongs to the PlsX family.</text>
</comment>
<gene>
    <name evidence="1" type="primary">plsX</name>
    <name type="ordered locus">LPC_0808</name>
</gene>
<accession>A5IBN4</accession>
<reference key="1">
    <citation type="submission" date="2006-11" db="EMBL/GenBank/DDBJ databases">
        <title>Identification and characterization of a new conjugation/ type IVA secretion system (trb/tra) of L. pneumophila Corby localized on a mobile genomic island.</title>
        <authorList>
            <person name="Gloeckner G."/>
            <person name="Albert-Weissenberger C."/>
            <person name="Weinmann E."/>
            <person name="Jacobi S."/>
            <person name="Schunder E."/>
            <person name="Steinert M."/>
            <person name="Buchrieser C."/>
            <person name="Hacker J."/>
            <person name="Heuner K."/>
        </authorList>
    </citation>
    <scope>NUCLEOTIDE SEQUENCE [LARGE SCALE GENOMIC DNA]</scope>
    <source>
        <strain>Corby</strain>
    </source>
</reference>
<proteinExistence type="inferred from homology"/>
<feature type="chain" id="PRO_1000001782" description="Phosphate acyltransferase">
    <location>
        <begin position="1"/>
        <end position="342"/>
    </location>
</feature>
<evidence type="ECO:0000255" key="1">
    <source>
        <dbReference type="HAMAP-Rule" id="MF_00019"/>
    </source>
</evidence>
<name>PLSX_LEGPC</name>
<dbReference type="EC" id="2.3.1.274" evidence="1"/>
<dbReference type="EMBL" id="CP000675">
    <property type="protein sequence ID" value="ABQ54784.1"/>
    <property type="molecule type" value="Genomic_DNA"/>
</dbReference>
<dbReference type="RefSeq" id="WP_011946412.1">
    <property type="nucleotide sequence ID" value="NZ_JAPMSS010000002.1"/>
</dbReference>
<dbReference type="SMR" id="A5IBN4"/>
<dbReference type="KEGG" id="lpc:LPC_0808"/>
<dbReference type="HOGENOM" id="CLU_039379_1_1_6"/>
<dbReference type="UniPathway" id="UPA00085"/>
<dbReference type="GO" id="GO:0005737">
    <property type="term" value="C:cytoplasm"/>
    <property type="evidence" value="ECO:0007669"/>
    <property type="project" value="UniProtKB-SubCell"/>
</dbReference>
<dbReference type="GO" id="GO:0043811">
    <property type="term" value="F:phosphate:acyl-[acyl carrier protein] acyltransferase activity"/>
    <property type="evidence" value="ECO:0007669"/>
    <property type="project" value="UniProtKB-UniRule"/>
</dbReference>
<dbReference type="GO" id="GO:0006633">
    <property type="term" value="P:fatty acid biosynthetic process"/>
    <property type="evidence" value="ECO:0007669"/>
    <property type="project" value="UniProtKB-UniRule"/>
</dbReference>
<dbReference type="GO" id="GO:0008654">
    <property type="term" value="P:phospholipid biosynthetic process"/>
    <property type="evidence" value="ECO:0007669"/>
    <property type="project" value="UniProtKB-KW"/>
</dbReference>
<dbReference type="Gene3D" id="3.40.718.10">
    <property type="entry name" value="Isopropylmalate Dehydrogenase"/>
    <property type="match status" value="1"/>
</dbReference>
<dbReference type="HAMAP" id="MF_00019">
    <property type="entry name" value="PlsX"/>
    <property type="match status" value="1"/>
</dbReference>
<dbReference type="InterPro" id="IPR003664">
    <property type="entry name" value="FA_synthesis"/>
</dbReference>
<dbReference type="InterPro" id="IPR012281">
    <property type="entry name" value="Phospholipid_synth_PlsX-like"/>
</dbReference>
<dbReference type="NCBIfam" id="TIGR00182">
    <property type="entry name" value="plsX"/>
    <property type="match status" value="1"/>
</dbReference>
<dbReference type="PANTHER" id="PTHR30100">
    <property type="entry name" value="FATTY ACID/PHOSPHOLIPID SYNTHESIS PROTEIN PLSX"/>
    <property type="match status" value="1"/>
</dbReference>
<dbReference type="PANTHER" id="PTHR30100:SF1">
    <property type="entry name" value="PHOSPHATE ACYLTRANSFERASE"/>
    <property type="match status" value="1"/>
</dbReference>
<dbReference type="Pfam" id="PF02504">
    <property type="entry name" value="FA_synthesis"/>
    <property type="match status" value="1"/>
</dbReference>
<dbReference type="PIRSF" id="PIRSF002465">
    <property type="entry name" value="Phsphlp_syn_PlsX"/>
    <property type="match status" value="1"/>
</dbReference>
<dbReference type="SUPFAM" id="SSF53659">
    <property type="entry name" value="Isocitrate/Isopropylmalate dehydrogenase-like"/>
    <property type="match status" value="1"/>
</dbReference>
<sequence>MKNITIAIDAMGGDHGLEIVIPACIRAVKNNPDLKLLLVGVQDKISASLKKHGMLSCQQFTIVHASEVVTMDELPSHALRNKKDSSMRIAINLVKEGRAQACVSAGNTGALMATARYVLKTLPGIDRPAIVSELPTMGGKTRVIDLGANVDSCAEHLFQFAVMGSALIQAIENKPKPKIGLLNIGVEEIKGNDQVKRTAHMLAECSVMNYVGYVEGDHFYSGDVDLVVCDGFVGNVALKASEGLAKLLLTVLKESFSRNWLTKIAGLIALPALKHLKNRLDPSRYNGASLLGLNGIVVKSHGGANEVGFQHAIEQAVLEVKNNVVDLVRDQINDFINQGLLL</sequence>
<keyword id="KW-0963">Cytoplasm</keyword>
<keyword id="KW-0444">Lipid biosynthesis</keyword>
<keyword id="KW-0443">Lipid metabolism</keyword>
<keyword id="KW-0594">Phospholipid biosynthesis</keyword>
<keyword id="KW-1208">Phospholipid metabolism</keyword>
<keyword id="KW-0808">Transferase</keyword>